<organism>
    <name type="scientific">Corynebacterium aurimucosum (strain ATCC 700975 / DSM 44827 / CIP 107346 / CN-1)</name>
    <name type="common">Corynebacterium nigricans</name>
    <dbReference type="NCBI Taxonomy" id="548476"/>
    <lineage>
        <taxon>Bacteria</taxon>
        <taxon>Bacillati</taxon>
        <taxon>Actinomycetota</taxon>
        <taxon>Actinomycetes</taxon>
        <taxon>Mycobacteriales</taxon>
        <taxon>Corynebacteriaceae</taxon>
        <taxon>Corynebacterium</taxon>
    </lineage>
</organism>
<proteinExistence type="inferred from homology"/>
<evidence type="ECO:0000255" key="1">
    <source>
        <dbReference type="HAMAP-Rule" id="MF_00300"/>
    </source>
</evidence>
<evidence type="ECO:0000256" key="2">
    <source>
        <dbReference type="SAM" id="MobiDB-lite"/>
    </source>
</evidence>
<name>AROC_CORA7</name>
<protein>
    <recommendedName>
        <fullName evidence="1">Chorismate synthase</fullName>
        <shortName evidence="1">CS</shortName>
        <ecNumber evidence="1">4.2.3.5</ecNumber>
    </recommendedName>
    <alternativeName>
        <fullName evidence="1">5-enolpyruvylshikimate-3-phosphate phospholyase</fullName>
    </alternativeName>
</protein>
<comment type="function">
    <text evidence="1">Catalyzes the anti-1,4-elimination of the C-3 phosphate and the C-6 proR hydrogen from 5-enolpyruvylshikimate-3-phosphate (EPSP) to yield chorismate, which is the branch point compound that serves as the starting substrate for the three terminal pathways of aromatic amino acid biosynthesis. This reaction introduces a second double bond into the aromatic ring system.</text>
</comment>
<comment type="catalytic activity">
    <reaction evidence="1">
        <text>5-O-(1-carboxyvinyl)-3-phosphoshikimate = chorismate + phosphate</text>
        <dbReference type="Rhea" id="RHEA:21020"/>
        <dbReference type="ChEBI" id="CHEBI:29748"/>
        <dbReference type="ChEBI" id="CHEBI:43474"/>
        <dbReference type="ChEBI" id="CHEBI:57701"/>
        <dbReference type="EC" id="4.2.3.5"/>
    </reaction>
</comment>
<comment type="cofactor">
    <cofactor evidence="1">
        <name>FMNH2</name>
        <dbReference type="ChEBI" id="CHEBI:57618"/>
    </cofactor>
    <text evidence="1">Reduced FMN (FMNH(2)).</text>
</comment>
<comment type="pathway">
    <text evidence="1">Metabolic intermediate biosynthesis; chorismate biosynthesis; chorismate from D-erythrose 4-phosphate and phosphoenolpyruvate: step 7/7.</text>
</comment>
<comment type="subunit">
    <text evidence="1">Homotetramer.</text>
</comment>
<comment type="similarity">
    <text evidence="1">Belongs to the chorismate synthase family.</text>
</comment>
<keyword id="KW-0028">Amino-acid biosynthesis</keyword>
<keyword id="KW-0057">Aromatic amino acid biosynthesis</keyword>
<keyword id="KW-0274">FAD</keyword>
<keyword id="KW-0285">Flavoprotein</keyword>
<keyword id="KW-0288">FMN</keyword>
<keyword id="KW-0456">Lyase</keyword>
<keyword id="KW-0521">NADP</keyword>
<keyword id="KW-1185">Reference proteome</keyword>
<gene>
    <name evidence="1" type="primary">aroC</name>
    <name type="ordered locus">cauri_1388</name>
</gene>
<feature type="chain" id="PRO_1000132764" description="Chorismate synthase">
    <location>
        <begin position="1"/>
        <end position="403"/>
    </location>
</feature>
<feature type="region of interest" description="Disordered" evidence="2">
    <location>
        <begin position="277"/>
        <end position="307"/>
    </location>
</feature>
<feature type="compositionally biased region" description="Basic and acidic residues" evidence="2">
    <location>
        <begin position="277"/>
        <end position="298"/>
    </location>
</feature>
<feature type="binding site" evidence="1">
    <location>
        <position position="40"/>
    </location>
    <ligand>
        <name>NADP(+)</name>
        <dbReference type="ChEBI" id="CHEBI:58349"/>
    </ligand>
</feature>
<feature type="binding site" evidence="1">
    <location>
        <position position="46"/>
    </location>
    <ligand>
        <name>NADP(+)</name>
        <dbReference type="ChEBI" id="CHEBI:58349"/>
    </ligand>
</feature>
<feature type="binding site" evidence="1">
    <location>
        <begin position="140"/>
        <end position="142"/>
    </location>
    <ligand>
        <name>FMN</name>
        <dbReference type="ChEBI" id="CHEBI:58210"/>
    </ligand>
</feature>
<feature type="binding site" evidence="1">
    <location>
        <begin position="261"/>
        <end position="262"/>
    </location>
    <ligand>
        <name>FMN</name>
        <dbReference type="ChEBI" id="CHEBI:58210"/>
    </ligand>
</feature>
<feature type="binding site" evidence="1">
    <location>
        <position position="305"/>
    </location>
    <ligand>
        <name>FMN</name>
        <dbReference type="ChEBI" id="CHEBI:58210"/>
    </ligand>
</feature>
<feature type="binding site" evidence="1">
    <location>
        <begin position="320"/>
        <end position="324"/>
    </location>
    <ligand>
        <name>FMN</name>
        <dbReference type="ChEBI" id="CHEBI:58210"/>
    </ligand>
</feature>
<feature type="binding site" evidence="1">
    <location>
        <position position="346"/>
    </location>
    <ligand>
        <name>FMN</name>
        <dbReference type="ChEBI" id="CHEBI:58210"/>
    </ligand>
</feature>
<sequence length="403" mass="42653">MLRWTTAGESHGQALVALIEHMPAGVPISQDDIALQLSRRRLGYGRGARMKFEADDLTLLSGIRHGLTLGSPIAIMIGNTEWPKWTTIMSPEALDLEDPEVAKAMASGRGAPLTRPRPGHADFAGMVKFDHSEARPILERSSARETAARVAAATVARNFLRETLGVEVLSHVISIGASAPYKGPHPSFADIEAIDASPVRACDKTAEESMISEIETAKKQGDTLGGIVEVIVEGLPIGLGSHTSGEDRLDAQLAAALMGIQAIKGVEVGDGFAEARRRGSEAHDEMVRTDEGVDRETNRAGGLEGGMTNGQTLRLRAAMKPISTVPRALKTVDMSTGGSATAIHQRSDVCAVPAAGVVAEAMVALVLARAVLEKFGGDSLAETKRNIAAYQEYVAGRLEWGEA</sequence>
<dbReference type="EC" id="4.2.3.5" evidence="1"/>
<dbReference type="EMBL" id="CP001601">
    <property type="protein sequence ID" value="ACP32981.1"/>
    <property type="molecule type" value="Genomic_DNA"/>
</dbReference>
<dbReference type="RefSeq" id="WP_012715065.1">
    <property type="nucleotide sequence ID" value="NC_012590.1"/>
</dbReference>
<dbReference type="SMR" id="C3PGM7"/>
<dbReference type="STRING" id="548476.cauri_1388"/>
<dbReference type="GeneID" id="31924014"/>
<dbReference type="KEGG" id="car:cauri_1388"/>
<dbReference type="eggNOG" id="COG0082">
    <property type="taxonomic scope" value="Bacteria"/>
</dbReference>
<dbReference type="HOGENOM" id="CLU_034547_2_0_11"/>
<dbReference type="OrthoDB" id="9771806at2"/>
<dbReference type="UniPathway" id="UPA00053">
    <property type="reaction ID" value="UER00090"/>
</dbReference>
<dbReference type="Proteomes" id="UP000002077">
    <property type="component" value="Chromosome"/>
</dbReference>
<dbReference type="GO" id="GO:0005829">
    <property type="term" value="C:cytosol"/>
    <property type="evidence" value="ECO:0007669"/>
    <property type="project" value="TreeGrafter"/>
</dbReference>
<dbReference type="GO" id="GO:0004107">
    <property type="term" value="F:chorismate synthase activity"/>
    <property type="evidence" value="ECO:0007669"/>
    <property type="project" value="UniProtKB-UniRule"/>
</dbReference>
<dbReference type="GO" id="GO:0010181">
    <property type="term" value="F:FMN binding"/>
    <property type="evidence" value="ECO:0007669"/>
    <property type="project" value="TreeGrafter"/>
</dbReference>
<dbReference type="GO" id="GO:0008652">
    <property type="term" value="P:amino acid biosynthetic process"/>
    <property type="evidence" value="ECO:0007669"/>
    <property type="project" value="UniProtKB-KW"/>
</dbReference>
<dbReference type="GO" id="GO:0009073">
    <property type="term" value="P:aromatic amino acid family biosynthetic process"/>
    <property type="evidence" value="ECO:0007669"/>
    <property type="project" value="UniProtKB-KW"/>
</dbReference>
<dbReference type="GO" id="GO:0009423">
    <property type="term" value="P:chorismate biosynthetic process"/>
    <property type="evidence" value="ECO:0007669"/>
    <property type="project" value="UniProtKB-UniRule"/>
</dbReference>
<dbReference type="CDD" id="cd07304">
    <property type="entry name" value="Chorismate_synthase"/>
    <property type="match status" value="1"/>
</dbReference>
<dbReference type="FunFam" id="3.60.150.10:FF:000002">
    <property type="entry name" value="Chorismate synthase"/>
    <property type="match status" value="1"/>
</dbReference>
<dbReference type="Gene3D" id="3.60.150.10">
    <property type="entry name" value="Chorismate synthase AroC"/>
    <property type="match status" value="1"/>
</dbReference>
<dbReference type="HAMAP" id="MF_00300">
    <property type="entry name" value="Chorismate_synth"/>
    <property type="match status" value="1"/>
</dbReference>
<dbReference type="InterPro" id="IPR000453">
    <property type="entry name" value="Chorismate_synth"/>
</dbReference>
<dbReference type="InterPro" id="IPR035904">
    <property type="entry name" value="Chorismate_synth_AroC_sf"/>
</dbReference>
<dbReference type="InterPro" id="IPR020541">
    <property type="entry name" value="Chorismate_synthase_CS"/>
</dbReference>
<dbReference type="NCBIfam" id="TIGR00033">
    <property type="entry name" value="aroC"/>
    <property type="match status" value="1"/>
</dbReference>
<dbReference type="NCBIfam" id="NF003793">
    <property type="entry name" value="PRK05382.1"/>
    <property type="match status" value="1"/>
</dbReference>
<dbReference type="PANTHER" id="PTHR21085">
    <property type="entry name" value="CHORISMATE SYNTHASE"/>
    <property type="match status" value="1"/>
</dbReference>
<dbReference type="PANTHER" id="PTHR21085:SF0">
    <property type="entry name" value="CHORISMATE SYNTHASE"/>
    <property type="match status" value="1"/>
</dbReference>
<dbReference type="Pfam" id="PF01264">
    <property type="entry name" value="Chorismate_synt"/>
    <property type="match status" value="1"/>
</dbReference>
<dbReference type="PIRSF" id="PIRSF001456">
    <property type="entry name" value="Chorismate_synth"/>
    <property type="match status" value="1"/>
</dbReference>
<dbReference type="SUPFAM" id="SSF103263">
    <property type="entry name" value="Chorismate synthase, AroC"/>
    <property type="match status" value="1"/>
</dbReference>
<dbReference type="PROSITE" id="PS00787">
    <property type="entry name" value="CHORISMATE_SYNTHASE_1"/>
    <property type="match status" value="1"/>
</dbReference>
<dbReference type="PROSITE" id="PS00788">
    <property type="entry name" value="CHORISMATE_SYNTHASE_2"/>
    <property type="match status" value="1"/>
</dbReference>
<dbReference type="PROSITE" id="PS00789">
    <property type="entry name" value="CHORISMATE_SYNTHASE_3"/>
    <property type="match status" value="1"/>
</dbReference>
<reference key="1">
    <citation type="journal article" date="2010" name="BMC Genomics">
        <title>Complete genome sequence and lifestyle of black-pigmented Corynebacterium aurimucosum ATCC 700975 (formerly C. nigricans CN-1) isolated from a vaginal swab of a woman with spontaneous abortion.</title>
        <authorList>
            <person name="Trost E."/>
            <person name="Gotker S."/>
            <person name="Schneider J."/>
            <person name="Schneiker-Bekel S."/>
            <person name="Szczepanowski R."/>
            <person name="Tilker A."/>
            <person name="Viehoever P."/>
            <person name="Arnold W."/>
            <person name="Bekel T."/>
            <person name="Blom J."/>
            <person name="Gartemann K.H."/>
            <person name="Linke B."/>
            <person name="Goesmann A."/>
            <person name="Puhler A."/>
            <person name="Shukla S.K."/>
            <person name="Tauch A."/>
        </authorList>
    </citation>
    <scope>NUCLEOTIDE SEQUENCE [LARGE SCALE GENOMIC DNA]</scope>
    <source>
        <strain>ATCC 700975 / DSM 44827 / CIP 107346 / CN-1</strain>
    </source>
</reference>
<accession>C3PGM7</accession>